<reference key="1">
    <citation type="journal article" date="1999" name="Nature">
        <title>Sequence and analysis of chromosome 2 of the plant Arabidopsis thaliana.</title>
        <authorList>
            <person name="Lin X."/>
            <person name="Kaul S."/>
            <person name="Rounsley S.D."/>
            <person name="Shea T.P."/>
            <person name="Benito M.-I."/>
            <person name="Town C.D."/>
            <person name="Fujii C.Y."/>
            <person name="Mason T.M."/>
            <person name="Bowman C.L."/>
            <person name="Barnstead M.E."/>
            <person name="Feldblyum T.V."/>
            <person name="Buell C.R."/>
            <person name="Ketchum K.A."/>
            <person name="Lee J.J."/>
            <person name="Ronning C.M."/>
            <person name="Koo H.L."/>
            <person name="Moffat K.S."/>
            <person name="Cronin L.A."/>
            <person name="Shen M."/>
            <person name="Pai G."/>
            <person name="Van Aken S."/>
            <person name="Umayam L."/>
            <person name="Tallon L.J."/>
            <person name="Gill J.E."/>
            <person name="Adams M.D."/>
            <person name="Carrera A.J."/>
            <person name="Creasy T.H."/>
            <person name="Goodman H.M."/>
            <person name="Somerville C.R."/>
            <person name="Copenhaver G.P."/>
            <person name="Preuss D."/>
            <person name="Nierman W.C."/>
            <person name="White O."/>
            <person name="Eisen J.A."/>
            <person name="Salzberg S.L."/>
            <person name="Fraser C.M."/>
            <person name="Venter J.C."/>
        </authorList>
    </citation>
    <scope>NUCLEOTIDE SEQUENCE [LARGE SCALE GENOMIC DNA]</scope>
    <source>
        <strain>cv. Columbia</strain>
    </source>
</reference>
<reference key="2">
    <citation type="journal article" date="2017" name="Plant J.">
        <title>Araport11: a complete reannotation of the Arabidopsis thaliana reference genome.</title>
        <authorList>
            <person name="Cheng C.Y."/>
            <person name="Krishnakumar V."/>
            <person name="Chan A.P."/>
            <person name="Thibaud-Nissen F."/>
            <person name="Schobel S."/>
            <person name="Town C.D."/>
        </authorList>
    </citation>
    <scope>GENOME REANNOTATION</scope>
    <source>
        <strain>cv. Columbia</strain>
    </source>
</reference>
<reference key="3">
    <citation type="journal article" date="2002" name="Science">
        <title>Functional annotation of a full-length Arabidopsis cDNA collection.</title>
        <authorList>
            <person name="Seki M."/>
            <person name="Narusaka M."/>
            <person name="Kamiya A."/>
            <person name="Ishida J."/>
            <person name="Satou M."/>
            <person name="Sakurai T."/>
            <person name="Nakajima M."/>
            <person name="Enju A."/>
            <person name="Akiyama K."/>
            <person name="Oono Y."/>
            <person name="Muramatsu M."/>
            <person name="Hayashizaki Y."/>
            <person name="Kawai J."/>
            <person name="Carninci P."/>
            <person name="Itoh M."/>
            <person name="Ishii Y."/>
            <person name="Arakawa T."/>
            <person name="Shibata K."/>
            <person name="Shinagawa A."/>
            <person name="Shinozaki K."/>
        </authorList>
    </citation>
    <scope>NUCLEOTIDE SEQUENCE [LARGE SCALE MRNA]</scope>
    <source>
        <strain>cv. Columbia</strain>
    </source>
</reference>
<reference key="4">
    <citation type="journal article" date="2003" name="Science">
        <title>Empirical analysis of transcriptional activity in the Arabidopsis genome.</title>
        <authorList>
            <person name="Yamada K."/>
            <person name="Lim J."/>
            <person name="Dale J.M."/>
            <person name="Chen H."/>
            <person name="Shinn P."/>
            <person name="Palm C.J."/>
            <person name="Southwick A.M."/>
            <person name="Wu H.C."/>
            <person name="Kim C.J."/>
            <person name="Nguyen M."/>
            <person name="Pham P.K."/>
            <person name="Cheuk R.F."/>
            <person name="Karlin-Newmann G."/>
            <person name="Liu S.X."/>
            <person name="Lam B."/>
            <person name="Sakano H."/>
            <person name="Wu T."/>
            <person name="Yu G."/>
            <person name="Miranda M."/>
            <person name="Quach H.L."/>
            <person name="Tripp M."/>
            <person name="Chang C.H."/>
            <person name="Lee J.M."/>
            <person name="Toriumi M.J."/>
            <person name="Chan M.M."/>
            <person name="Tang C.C."/>
            <person name="Onodera C.S."/>
            <person name="Deng J.M."/>
            <person name="Akiyama K."/>
            <person name="Ansari Y."/>
            <person name="Arakawa T."/>
            <person name="Banh J."/>
            <person name="Banno F."/>
            <person name="Bowser L."/>
            <person name="Brooks S.Y."/>
            <person name="Carninci P."/>
            <person name="Chao Q."/>
            <person name="Choy N."/>
            <person name="Enju A."/>
            <person name="Goldsmith A.D."/>
            <person name="Gurjal M."/>
            <person name="Hansen N.F."/>
            <person name="Hayashizaki Y."/>
            <person name="Johnson-Hopson C."/>
            <person name="Hsuan V.W."/>
            <person name="Iida K."/>
            <person name="Karnes M."/>
            <person name="Khan S."/>
            <person name="Koesema E."/>
            <person name="Ishida J."/>
            <person name="Jiang P.X."/>
            <person name="Jones T."/>
            <person name="Kawai J."/>
            <person name="Kamiya A."/>
            <person name="Meyers C."/>
            <person name="Nakajima M."/>
            <person name="Narusaka M."/>
            <person name="Seki M."/>
            <person name="Sakurai T."/>
            <person name="Satou M."/>
            <person name="Tamse R."/>
            <person name="Vaysberg M."/>
            <person name="Wallender E.K."/>
            <person name="Wong C."/>
            <person name="Yamamura Y."/>
            <person name="Yuan S."/>
            <person name="Shinozaki K."/>
            <person name="Davis R.W."/>
            <person name="Theologis A."/>
            <person name="Ecker J.R."/>
        </authorList>
    </citation>
    <scope>NUCLEOTIDE SEQUENCE [LARGE SCALE MRNA]</scope>
    <source>
        <strain>cv. Columbia</strain>
    </source>
</reference>
<reference key="5">
    <citation type="journal article" date="2009" name="Plant Physiol.">
        <title>Large-scale Arabidopsis phosphoproteome profiling reveals novel chloroplast kinase substrates and phosphorylation networks.</title>
        <authorList>
            <person name="Reiland S."/>
            <person name="Messerli G."/>
            <person name="Baerenfaller K."/>
            <person name="Gerrits B."/>
            <person name="Endler A."/>
            <person name="Grossmann J."/>
            <person name="Gruissem W."/>
            <person name="Baginsky S."/>
        </authorList>
    </citation>
    <scope>IDENTIFICATION BY MASS SPECTROMETRY [LARGE SCALE ANALYSIS]</scope>
</reference>
<reference key="6">
    <citation type="journal article" date="2019" name="Nat. Plants">
        <title>A SOSEKI-based coordinate system interprets global polarity cues in Arabidopsis.</title>
        <authorList>
            <person name="Yoshida S."/>
            <person name="van der Schuren A."/>
            <person name="van Dop M."/>
            <person name="van Galen L."/>
            <person name="Saiga S."/>
            <person name="Adibi M."/>
            <person name="Moeller B."/>
            <person name="Ten Hove C.A."/>
            <person name="Marhavy P."/>
            <person name="Smith R."/>
            <person name="Friml J."/>
            <person name="Weijers D."/>
        </authorList>
    </citation>
    <scope>FUNCTION</scope>
    <scope>SUBCELLULAR LOCATION</scope>
    <scope>DEVELOPMENTAL STAGE</scope>
    <scope>TISSUE SPECIFICITY</scope>
    <source>
        <strain>cv. Columbia</strain>
    </source>
</reference>
<reference key="7">
    <citation type="journal article" date="2020" name="Cell">
        <title>DIX domain polymerization drives assembly of plant cell polarity complexes.</title>
        <authorList>
            <person name="van Dop M."/>
            <person name="Fiedler M."/>
            <person name="Mutte S."/>
            <person name="de Keijzer J."/>
            <person name="Olijslager L."/>
            <person name="Albrecht C."/>
            <person name="Liao C.Y."/>
            <person name="Janson M.E."/>
            <person name="Bienz M."/>
            <person name="Weijers D."/>
        </authorList>
    </citation>
    <scope>FUNCTION</scope>
    <scope>INTERACTION WITH ANGUSTIFOLIA</scope>
    <scope>SUBUNIT</scope>
    <scope>GENE FAMILY</scope>
</reference>
<gene>
    <name evidence="5" type="primary">SOK3</name>
    <name evidence="8" type="ordered locus">At2g28150</name>
    <name evidence="9" type="ORF">F24D13.6</name>
</gene>
<protein>
    <recommendedName>
        <fullName evidence="5">Protein SOSEKI 3</fullName>
        <shortName evidence="6">AtSOK3</shortName>
    </recommendedName>
</protein>
<sequence>MEARMKKYSREVSPERAKVWTEKSPKYHQKIKKVQIVYYLSKNRQLEHPHFMEVLISSPNGLYLRDVIERLNVLRGRGMASMYSWSSKRSYRNGFVWHDLSEDDLILPANGNEYVLKGSELFDESNSDHFSPIVNLATQNMKQIVVEPPSSRSMDDSSSSSSMNNGKGTNKHSHEDDELSPPALRSVSSSGVSPDSRDAKNSSSWCLAEYKVYKSEGLADASTQTDETVSGRSKTPIETFSRGVSTDEDVSSEPETSENNLVSEASCAGKERESAEISRNSVSPPFSNSASSLGGKTDTLESLIRADVSKMNSFRILEQEDVRMPAIPRLRASNMLMQLISCGSISVKDNNFGLVPTYKPKFGHSKFPSPFFSSSFMMGDLDRLSETPSLMGLRMEEKEYFSGSLVETKLQKKDAADSNASLKRSSSYNGDRASNQMGVAENGDSKPDSSKNNPSSRKASSILGKQQPLVSEKRRDSSEDTTKNIPCTTKTHDACSKRITESLRKPDSFREDEERVIKIDERLASGARVRIESKVPSEEP</sequence>
<feature type="chain" id="PRO_0000452142" description="Protein SOSEKI 3">
    <location>
        <begin position="1"/>
        <end position="540"/>
    </location>
</feature>
<feature type="region of interest" description="DIX-like oligomerization domain" evidence="1">
    <location>
        <begin position="32"/>
        <end position="123"/>
    </location>
</feature>
<feature type="region of interest" description="Disordered" evidence="2">
    <location>
        <begin position="147"/>
        <end position="201"/>
    </location>
</feature>
<feature type="region of interest" description="Disordered" evidence="2">
    <location>
        <begin position="219"/>
        <end position="294"/>
    </location>
</feature>
<feature type="region of interest" description="Disordered" evidence="2">
    <location>
        <begin position="412"/>
        <end position="492"/>
    </location>
</feature>
<feature type="short sequence motif" description="Association to cell membranes" evidence="1">
    <location>
        <begin position="342"/>
        <end position="343"/>
    </location>
</feature>
<feature type="compositionally biased region" description="Low complexity" evidence="2">
    <location>
        <begin position="150"/>
        <end position="163"/>
    </location>
</feature>
<feature type="compositionally biased region" description="Low complexity" evidence="2">
    <location>
        <begin position="185"/>
        <end position="194"/>
    </location>
</feature>
<feature type="compositionally biased region" description="Polar residues" evidence="2">
    <location>
        <begin position="221"/>
        <end position="244"/>
    </location>
</feature>
<feature type="compositionally biased region" description="Acidic residues" evidence="2">
    <location>
        <begin position="246"/>
        <end position="256"/>
    </location>
</feature>
<feature type="compositionally biased region" description="Low complexity" evidence="2">
    <location>
        <begin position="280"/>
        <end position="292"/>
    </location>
</feature>
<feature type="compositionally biased region" description="Polar residues" evidence="2">
    <location>
        <begin position="418"/>
        <end position="437"/>
    </location>
</feature>
<feature type="compositionally biased region" description="Basic and acidic residues" evidence="2">
    <location>
        <begin position="471"/>
        <end position="482"/>
    </location>
</feature>
<comment type="function">
    <text evidence="3">SOSEKI proteins (SOK1-5) locally interpret global polarity cues and can influence cell division orientation to coordinate cell polarization relative to body axes, probably by guiding ANGUSTIFOLIA (AN) polarized localization.</text>
</comment>
<comment type="subunit">
    <text evidence="1 4">Homodimer (By similarity). Forms long polymer filaments with other SOKs proteins polymers (e.g. SOK1, SOK2, SOK3 and SOK4) crucial for polar localization and biological activity (PubMed:32004461). Binds to ANGUSTIFOLIA (AN) (PubMed:32004461).</text>
</comment>
<comment type="subcellular location">
    <subcellularLocation>
        <location evidence="3">Cell membrane</location>
        <topology evidence="3">Peripheral membrane protein</topology>
        <orientation evidence="3">Cytoplasmic side</orientation>
    </subcellularLocation>
    <text evidence="3">SOSEKI proteins integrate apical-basal and radial organismal axes to localize to polar cell edges.</text>
</comment>
<comment type="tissue specificity">
    <text evidence="3">Expressed during embryogenesis and in roots.</text>
</comment>
<comment type="developmental stage">
    <text evidence="3">Accumulates at the basal side and all corners of most cells in the primary root, lateral roots and embryos.</text>
</comment>
<comment type="domain">
    <text evidence="1">The DIX-like oligomerization domain is required for polymerization, edge localization and biological activity.</text>
</comment>
<comment type="miscellaneous">
    <text evidence="5">'Soseki' means cornerstone in Japanese.</text>
</comment>
<comment type="similarity">
    <text evidence="7">Belongs to the SOSEKI family.</text>
</comment>
<comment type="sequence caution" evidence="7">
    <conflict type="erroneous gene model prediction">
        <sequence resource="EMBL-CDS" id="AAC98451"/>
    </conflict>
</comment>
<dbReference type="EMBL" id="AC005851">
    <property type="protein sequence ID" value="AAC98451.1"/>
    <property type="status" value="ALT_SEQ"/>
    <property type="molecule type" value="Genomic_DNA"/>
</dbReference>
<dbReference type="EMBL" id="CP002685">
    <property type="protein sequence ID" value="AEC08085.1"/>
    <property type="molecule type" value="Genomic_DNA"/>
</dbReference>
<dbReference type="EMBL" id="AK117392">
    <property type="protein sequence ID" value="BAC42061.1"/>
    <property type="molecule type" value="mRNA"/>
</dbReference>
<dbReference type="EMBL" id="BT006130">
    <property type="protein sequence ID" value="AAP04115.1"/>
    <property type="molecule type" value="mRNA"/>
</dbReference>
<dbReference type="PIR" id="D84681">
    <property type="entry name" value="D84681"/>
</dbReference>
<dbReference type="RefSeq" id="NP_180382.2">
    <property type="nucleotide sequence ID" value="NM_128375.4"/>
</dbReference>
<dbReference type="SMR" id="Q8GYT8"/>
<dbReference type="FunCoup" id="Q8GYT8">
    <property type="interactions" value="924"/>
</dbReference>
<dbReference type="STRING" id="3702.Q8GYT8"/>
<dbReference type="iPTMnet" id="Q8GYT8"/>
<dbReference type="PaxDb" id="3702-AT2G28150.1"/>
<dbReference type="ProteomicsDB" id="187545"/>
<dbReference type="EnsemblPlants" id="AT2G28150.1">
    <property type="protein sequence ID" value="AT2G28150.1"/>
    <property type="gene ID" value="AT2G28150"/>
</dbReference>
<dbReference type="GeneID" id="817361"/>
<dbReference type="Gramene" id="AT2G28150.1">
    <property type="protein sequence ID" value="AT2G28150.1"/>
    <property type="gene ID" value="AT2G28150"/>
</dbReference>
<dbReference type="KEGG" id="ath:AT2G28150"/>
<dbReference type="Araport" id="AT2G28150"/>
<dbReference type="TAIR" id="AT2G28150">
    <property type="gene designation" value="SOK3"/>
</dbReference>
<dbReference type="eggNOG" id="ENOG502QTBW">
    <property type="taxonomic scope" value="Eukaryota"/>
</dbReference>
<dbReference type="HOGENOM" id="CLU_025038_1_0_1"/>
<dbReference type="InParanoid" id="Q8GYT8"/>
<dbReference type="OrthoDB" id="1280899at2759"/>
<dbReference type="PhylomeDB" id="Q8GYT8"/>
<dbReference type="PRO" id="PR:Q8GYT8"/>
<dbReference type="Proteomes" id="UP000006548">
    <property type="component" value="Chromosome 2"/>
</dbReference>
<dbReference type="ExpressionAtlas" id="Q8GYT8">
    <property type="expression patterns" value="baseline and differential"/>
</dbReference>
<dbReference type="GO" id="GO:0009925">
    <property type="term" value="C:basal plasma membrane"/>
    <property type="evidence" value="ECO:0000314"/>
    <property type="project" value="UniProtKB"/>
</dbReference>
<dbReference type="GO" id="GO:0042803">
    <property type="term" value="F:protein homodimerization activity"/>
    <property type="evidence" value="ECO:0000250"/>
    <property type="project" value="UniProtKB"/>
</dbReference>
<dbReference type="GO" id="GO:0051301">
    <property type="term" value="P:cell division"/>
    <property type="evidence" value="ECO:0007669"/>
    <property type="project" value="UniProtKB-KW"/>
</dbReference>
<dbReference type="GO" id="GO:1905392">
    <property type="term" value="P:plant organ morphogenesis"/>
    <property type="evidence" value="ECO:0000315"/>
    <property type="project" value="UniProtKB"/>
</dbReference>
<dbReference type="GO" id="GO:0051258">
    <property type="term" value="P:protein polymerization"/>
    <property type="evidence" value="ECO:0000314"/>
    <property type="project" value="UniProtKB"/>
</dbReference>
<dbReference type="GO" id="GO:0051302">
    <property type="term" value="P:regulation of cell division"/>
    <property type="evidence" value="ECO:0000315"/>
    <property type="project" value="UniProtKB"/>
</dbReference>
<dbReference type="GO" id="GO:2000067">
    <property type="term" value="P:regulation of root morphogenesis"/>
    <property type="evidence" value="ECO:0000315"/>
    <property type="project" value="UniProtKB"/>
</dbReference>
<dbReference type="GO" id="GO:0090708">
    <property type="term" value="P:specification of plant organ axis polarity"/>
    <property type="evidence" value="ECO:0000315"/>
    <property type="project" value="UniProtKB"/>
</dbReference>
<dbReference type="InterPro" id="IPR010369">
    <property type="entry name" value="SOK"/>
</dbReference>
<dbReference type="InterPro" id="IPR048351">
    <property type="entry name" value="SOK_DIX"/>
</dbReference>
<dbReference type="InterPro" id="IPR021182">
    <property type="entry name" value="SOK_magnoliopsida"/>
</dbReference>
<dbReference type="PANTHER" id="PTHR31083:SF6">
    <property type="entry name" value="PROTEIN SOSEKI 3"/>
    <property type="match status" value="1"/>
</dbReference>
<dbReference type="PANTHER" id="PTHR31083">
    <property type="entry name" value="UPSTREAM OF FLC PROTEIN (DUF966)"/>
    <property type="match status" value="1"/>
</dbReference>
<dbReference type="Pfam" id="PF06136">
    <property type="entry name" value="SOK"/>
    <property type="match status" value="1"/>
</dbReference>
<dbReference type="PIRSF" id="PIRSF031043">
    <property type="entry name" value="UCP031043"/>
    <property type="match status" value="1"/>
</dbReference>
<organism>
    <name type="scientific">Arabidopsis thaliana</name>
    <name type="common">Mouse-ear cress</name>
    <dbReference type="NCBI Taxonomy" id="3702"/>
    <lineage>
        <taxon>Eukaryota</taxon>
        <taxon>Viridiplantae</taxon>
        <taxon>Streptophyta</taxon>
        <taxon>Embryophyta</taxon>
        <taxon>Tracheophyta</taxon>
        <taxon>Spermatophyta</taxon>
        <taxon>Magnoliopsida</taxon>
        <taxon>eudicotyledons</taxon>
        <taxon>Gunneridae</taxon>
        <taxon>Pentapetalae</taxon>
        <taxon>rosids</taxon>
        <taxon>malvids</taxon>
        <taxon>Brassicales</taxon>
        <taxon>Brassicaceae</taxon>
        <taxon>Camelineae</taxon>
        <taxon>Arabidopsis</taxon>
    </lineage>
</organism>
<name>SOK3_ARATH</name>
<proteinExistence type="evidence at protein level"/>
<accession>Q8GYT8</accession>
<accession>Q9ZUV7</accession>
<keyword id="KW-0131">Cell cycle</keyword>
<keyword id="KW-0132">Cell division</keyword>
<keyword id="KW-1003">Cell membrane</keyword>
<keyword id="KW-0217">Developmental protein</keyword>
<keyword id="KW-0472">Membrane</keyword>
<keyword id="KW-1185">Reference proteome</keyword>
<evidence type="ECO:0000250" key="1">
    <source>
        <dbReference type="UniProtKB" id="Q9SYJ8"/>
    </source>
</evidence>
<evidence type="ECO:0000256" key="2">
    <source>
        <dbReference type="SAM" id="MobiDB-lite"/>
    </source>
</evidence>
<evidence type="ECO:0000269" key="3">
    <source>
    </source>
</evidence>
<evidence type="ECO:0000269" key="4">
    <source>
    </source>
</evidence>
<evidence type="ECO:0000303" key="5">
    <source>
    </source>
</evidence>
<evidence type="ECO:0000303" key="6">
    <source>
    </source>
</evidence>
<evidence type="ECO:0000305" key="7"/>
<evidence type="ECO:0000312" key="8">
    <source>
        <dbReference type="Araport" id="AT2G28150"/>
    </source>
</evidence>
<evidence type="ECO:0000312" key="9">
    <source>
        <dbReference type="EMBL" id="AEC08085.1"/>
    </source>
</evidence>